<feature type="chain" id="PRO_0000376503" description="Probable cell division protein WhiA">
    <location>
        <begin position="1"/>
        <end position="310"/>
    </location>
</feature>
<feature type="DNA-binding region" description="H-T-H motif" evidence="1">
    <location>
        <begin position="274"/>
        <end position="308"/>
    </location>
</feature>
<comment type="function">
    <text evidence="1">Involved in cell division and chromosome segregation.</text>
</comment>
<comment type="similarity">
    <text evidence="1">Belongs to the WhiA family.</text>
</comment>
<dbReference type="EMBL" id="AL935263">
    <property type="protein sequence ID" value="CCC78243.1"/>
    <property type="molecule type" value="Genomic_DNA"/>
</dbReference>
<dbReference type="RefSeq" id="WP_003641038.1">
    <property type="nucleotide sequence ID" value="NC_004567.2"/>
</dbReference>
<dbReference type="RefSeq" id="YP_004888757.1">
    <property type="nucleotide sequence ID" value="NC_004567.2"/>
</dbReference>
<dbReference type="SMR" id="Q88YI2"/>
<dbReference type="STRING" id="220668.lp_0781"/>
<dbReference type="EnsemblBacteria" id="CCC78243">
    <property type="protein sequence ID" value="CCC78243"/>
    <property type="gene ID" value="lp_0781"/>
</dbReference>
<dbReference type="GeneID" id="89668343"/>
<dbReference type="KEGG" id="lpl:lp_0781"/>
<dbReference type="PATRIC" id="fig|220668.9.peg.660"/>
<dbReference type="eggNOG" id="COG1481">
    <property type="taxonomic scope" value="Bacteria"/>
</dbReference>
<dbReference type="HOGENOM" id="CLU_053282_1_0_9"/>
<dbReference type="OrthoDB" id="401278at2"/>
<dbReference type="PhylomeDB" id="Q88YI2"/>
<dbReference type="Proteomes" id="UP000000432">
    <property type="component" value="Chromosome"/>
</dbReference>
<dbReference type="GO" id="GO:0003677">
    <property type="term" value="F:DNA binding"/>
    <property type="evidence" value="ECO:0007669"/>
    <property type="project" value="UniProtKB-UniRule"/>
</dbReference>
<dbReference type="GO" id="GO:0051301">
    <property type="term" value="P:cell division"/>
    <property type="evidence" value="ECO:0007669"/>
    <property type="project" value="UniProtKB-UniRule"/>
</dbReference>
<dbReference type="GO" id="GO:0043937">
    <property type="term" value="P:regulation of sporulation"/>
    <property type="evidence" value="ECO:0007669"/>
    <property type="project" value="InterPro"/>
</dbReference>
<dbReference type="Gene3D" id="3.10.28.10">
    <property type="entry name" value="Homing endonucleases"/>
    <property type="match status" value="1"/>
</dbReference>
<dbReference type="HAMAP" id="MF_01420">
    <property type="entry name" value="HTH_type_WhiA"/>
    <property type="match status" value="1"/>
</dbReference>
<dbReference type="InterPro" id="IPR027434">
    <property type="entry name" value="Homing_endonucl"/>
</dbReference>
<dbReference type="InterPro" id="IPR018478">
    <property type="entry name" value="Sporu_reg_WhiA_N_dom"/>
</dbReference>
<dbReference type="InterPro" id="IPR003802">
    <property type="entry name" value="Sporulation_regulator_WhiA"/>
</dbReference>
<dbReference type="InterPro" id="IPR023054">
    <property type="entry name" value="Sporulation_regulator_WhiA_C"/>
</dbReference>
<dbReference type="InterPro" id="IPR039518">
    <property type="entry name" value="WhiA_LAGLIDADG_dom"/>
</dbReference>
<dbReference type="NCBIfam" id="TIGR00647">
    <property type="entry name" value="DNA_bind_WhiA"/>
    <property type="match status" value="1"/>
</dbReference>
<dbReference type="PANTHER" id="PTHR37307">
    <property type="entry name" value="CELL DIVISION PROTEIN WHIA-RELATED"/>
    <property type="match status" value="1"/>
</dbReference>
<dbReference type="PANTHER" id="PTHR37307:SF1">
    <property type="entry name" value="CELL DIVISION PROTEIN WHIA-RELATED"/>
    <property type="match status" value="1"/>
</dbReference>
<dbReference type="Pfam" id="PF02650">
    <property type="entry name" value="HTH_WhiA"/>
    <property type="match status" value="1"/>
</dbReference>
<dbReference type="Pfam" id="PF14527">
    <property type="entry name" value="LAGLIDADG_WhiA"/>
    <property type="match status" value="1"/>
</dbReference>
<dbReference type="Pfam" id="PF10298">
    <property type="entry name" value="WhiA_N"/>
    <property type="match status" value="1"/>
</dbReference>
<dbReference type="SUPFAM" id="SSF55608">
    <property type="entry name" value="Homing endonucleases"/>
    <property type="match status" value="1"/>
</dbReference>
<evidence type="ECO:0000255" key="1">
    <source>
        <dbReference type="HAMAP-Rule" id="MF_01420"/>
    </source>
</evidence>
<sequence>MSYASDVKKELTNLAVHRENAKAELMALIRMNGAISIANHHFILNIQTENPAIARRIYRLLKQFYDVDSELIVRRKMKLNKNNLYIVRLKTGTDMVLADLGILKDYQIVEVAPTEVLTDDAAVRSYLRGAFLAGGSVNNPETSRYHLEIYSLYEEHNHMISEMMNQYGLNSRTTDRRGGFITYIKEAEKIADFLSLVGATNAMLKFEDIRIMRDMRNSVNRLVNCENANMDKVANASSKQIENILLIDATVGLQQLPPKLQEVAVARLEHREVSLKELGTLVPGGPISKSGINHRLRKINQFAEQLQKDA</sequence>
<protein>
    <recommendedName>
        <fullName evidence="1">Probable cell division protein WhiA</fullName>
    </recommendedName>
</protein>
<gene>
    <name evidence="1" type="primary">whiA</name>
    <name type="ordered locus">lp_0781</name>
</gene>
<keyword id="KW-0131">Cell cycle</keyword>
<keyword id="KW-0132">Cell division</keyword>
<keyword id="KW-0238">DNA-binding</keyword>
<keyword id="KW-1185">Reference proteome</keyword>
<organism>
    <name type="scientific">Lactiplantibacillus plantarum (strain ATCC BAA-793 / NCIMB 8826 / WCFS1)</name>
    <name type="common">Lactobacillus plantarum</name>
    <dbReference type="NCBI Taxonomy" id="220668"/>
    <lineage>
        <taxon>Bacteria</taxon>
        <taxon>Bacillati</taxon>
        <taxon>Bacillota</taxon>
        <taxon>Bacilli</taxon>
        <taxon>Lactobacillales</taxon>
        <taxon>Lactobacillaceae</taxon>
        <taxon>Lactiplantibacillus</taxon>
    </lineage>
</organism>
<name>WHIA_LACPL</name>
<proteinExistence type="inferred from homology"/>
<accession>Q88YI2</accession>
<accession>F9UM04</accession>
<reference key="1">
    <citation type="journal article" date="2003" name="Proc. Natl. Acad. Sci. U.S.A.">
        <title>Complete genome sequence of Lactobacillus plantarum WCFS1.</title>
        <authorList>
            <person name="Kleerebezem M."/>
            <person name="Boekhorst J."/>
            <person name="van Kranenburg R."/>
            <person name="Molenaar D."/>
            <person name="Kuipers O.P."/>
            <person name="Leer R."/>
            <person name="Tarchini R."/>
            <person name="Peters S.A."/>
            <person name="Sandbrink H.M."/>
            <person name="Fiers M.W.E.J."/>
            <person name="Stiekema W."/>
            <person name="Klein Lankhorst R.M."/>
            <person name="Bron P.A."/>
            <person name="Hoffer S.M."/>
            <person name="Nierop Groot M.N."/>
            <person name="Kerkhoven R."/>
            <person name="De Vries M."/>
            <person name="Ursing B."/>
            <person name="De Vos W.M."/>
            <person name="Siezen R.J."/>
        </authorList>
    </citation>
    <scope>NUCLEOTIDE SEQUENCE [LARGE SCALE GENOMIC DNA]</scope>
    <source>
        <strain>ATCC BAA-793 / NCIMB 8826 / WCFS1</strain>
    </source>
</reference>
<reference key="2">
    <citation type="journal article" date="2012" name="J. Bacteriol.">
        <title>Complete resequencing and reannotation of the Lactobacillus plantarum WCFS1 genome.</title>
        <authorList>
            <person name="Siezen R.J."/>
            <person name="Francke C."/>
            <person name="Renckens B."/>
            <person name="Boekhorst J."/>
            <person name="Wels M."/>
            <person name="Kleerebezem M."/>
            <person name="van Hijum S.A."/>
        </authorList>
    </citation>
    <scope>NUCLEOTIDE SEQUENCE [LARGE SCALE GENOMIC DNA]</scope>
    <scope>GENOME REANNOTATION</scope>
    <source>
        <strain>ATCC BAA-793 / NCIMB 8826 / WCFS1</strain>
    </source>
</reference>